<comment type="function">
    <text evidence="1">Aspartyl-tRNA synthetase with relaxed tRNA specificity since it is able to aspartylate not only its cognate tRNA(Asp) but also tRNA(Asn). Reaction proceeds in two steps: L-aspartate is first activated by ATP to form Asp-AMP and then transferred to the acceptor end of tRNA(Asp/Asn).</text>
</comment>
<comment type="catalytic activity">
    <reaction evidence="1">
        <text>tRNA(Asx) + L-aspartate + ATP = L-aspartyl-tRNA(Asx) + AMP + diphosphate</text>
        <dbReference type="Rhea" id="RHEA:18349"/>
        <dbReference type="Rhea" id="RHEA-COMP:9710"/>
        <dbReference type="Rhea" id="RHEA-COMP:9711"/>
        <dbReference type="ChEBI" id="CHEBI:29991"/>
        <dbReference type="ChEBI" id="CHEBI:30616"/>
        <dbReference type="ChEBI" id="CHEBI:33019"/>
        <dbReference type="ChEBI" id="CHEBI:78442"/>
        <dbReference type="ChEBI" id="CHEBI:78516"/>
        <dbReference type="ChEBI" id="CHEBI:456215"/>
        <dbReference type="EC" id="6.1.1.23"/>
    </reaction>
</comment>
<comment type="subunit">
    <text evidence="1">Homodimer.</text>
</comment>
<comment type="subcellular location">
    <subcellularLocation>
        <location evidence="1">Cytoplasm</location>
    </subcellularLocation>
</comment>
<comment type="similarity">
    <text evidence="1">Belongs to the class-II aminoacyl-tRNA synthetase family. Type 1 subfamily.</text>
</comment>
<dbReference type="EC" id="6.1.1.23" evidence="1"/>
<dbReference type="EMBL" id="AM421808">
    <property type="protein sequence ID" value="CAM10865.1"/>
    <property type="molecule type" value="Genomic_DNA"/>
</dbReference>
<dbReference type="RefSeq" id="WP_002247977.1">
    <property type="nucleotide sequence ID" value="NC_008767.1"/>
</dbReference>
<dbReference type="SMR" id="A1KVG2"/>
<dbReference type="KEGG" id="nmc:NMC1684"/>
<dbReference type="HOGENOM" id="CLU_014330_3_2_4"/>
<dbReference type="Proteomes" id="UP000002286">
    <property type="component" value="Chromosome"/>
</dbReference>
<dbReference type="GO" id="GO:0005737">
    <property type="term" value="C:cytoplasm"/>
    <property type="evidence" value="ECO:0007669"/>
    <property type="project" value="UniProtKB-SubCell"/>
</dbReference>
<dbReference type="GO" id="GO:0004815">
    <property type="term" value="F:aspartate-tRNA ligase activity"/>
    <property type="evidence" value="ECO:0007669"/>
    <property type="project" value="UniProtKB-UniRule"/>
</dbReference>
<dbReference type="GO" id="GO:0050560">
    <property type="term" value="F:aspartate-tRNA(Asn) ligase activity"/>
    <property type="evidence" value="ECO:0007669"/>
    <property type="project" value="UniProtKB-EC"/>
</dbReference>
<dbReference type="GO" id="GO:0005524">
    <property type="term" value="F:ATP binding"/>
    <property type="evidence" value="ECO:0007669"/>
    <property type="project" value="UniProtKB-UniRule"/>
</dbReference>
<dbReference type="GO" id="GO:0003676">
    <property type="term" value="F:nucleic acid binding"/>
    <property type="evidence" value="ECO:0007669"/>
    <property type="project" value="InterPro"/>
</dbReference>
<dbReference type="GO" id="GO:0006422">
    <property type="term" value="P:aspartyl-tRNA aminoacylation"/>
    <property type="evidence" value="ECO:0007669"/>
    <property type="project" value="UniProtKB-UniRule"/>
</dbReference>
<dbReference type="CDD" id="cd00777">
    <property type="entry name" value="AspRS_core"/>
    <property type="match status" value="1"/>
</dbReference>
<dbReference type="CDD" id="cd04317">
    <property type="entry name" value="EcAspRS_like_N"/>
    <property type="match status" value="1"/>
</dbReference>
<dbReference type="Gene3D" id="3.30.930.10">
    <property type="entry name" value="Bira Bifunctional Protein, Domain 2"/>
    <property type="match status" value="1"/>
</dbReference>
<dbReference type="Gene3D" id="3.30.1360.30">
    <property type="entry name" value="GAD-like domain"/>
    <property type="match status" value="1"/>
</dbReference>
<dbReference type="Gene3D" id="2.40.50.140">
    <property type="entry name" value="Nucleic acid-binding proteins"/>
    <property type="match status" value="1"/>
</dbReference>
<dbReference type="HAMAP" id="MF_00044">
    <property type="entry name" value="Asp_tRNA_synth_type1"/>
    <property type="match status" value="1"/>
</dbReference>
<dbReference type="InterPro" id="IPR004364">
    <property type="entry name" value="Aa-tRNA-synt_II"/>
</dbReference>
<dbReference type="InterPro" id="IPR006195">
    <property type="entry name" value="aa-tRNA-synth_II"/>
</dbReference>
<dbReference type="InterPro" id="IPR045864">
    <property type="entry name" value="aa-tRNA-synth_II/BPL/LPL"/>
</dbReference>
<dbReference type="InterPro" id="IPR004524">
    <property type="entry name" value="Asp-tRNA-ligase_1"/>
</dbReference>
<dbReference type="InterPro" id="IPR047089">
    <property type="entry name" value="Asp-tRNA-ligase_1_N"/>
</dbReference>
<dbReference type="InterPro" id="IPR002312">
    <property type="entry name" value="Asp/Asn-tRNA-synth_IIb"/>
</dbReference>
<dbReference type="InterPro" id="IPR047090">
    <property type="entry name" value="AspRS_core"/>
</dbReference>
<dbReference type="InterPro" id="IPR004115">
    <property type="entry name" value="GAD-like_sf"/>
</dbReference>
<dbReference type="InterPro" id="IPR029351">
    <property type="entry name" value="GAD_dom"/>
</dbReference>
<dbReference type="InterPro" id="IPR012340">
    <property type="entry name" value="NA-bd_OB-fold"/>
</dbReference>
<dbReference type="InterPro" id="IPR004365">
    <property type="entry name" value="NA-bd_OB_tRNA"/>
</dbReference>
<dbReference type="NCBIfam" id="TIGR00459">
    <property type="entry name" value="aspS_bact"/>
    <property type="match status" value="1"/>
</dbReference>
<dbReference type="NCBIfam" id="NF001750">
    <property type="entry name" value="PRK00476.1"/>
    <property type="match status" value="1"/>
</dbReference>
<dbReference type="PANTHER" id="PTHR22594:SF5">
    <property type="entry name" value="ASPARTATE--TRNA LIGASE, MITOCHONDRIAL"/>
    <property type="match status" value="1"/>
</dbReference>
<dbReference type="PANTHER" id="PTHR22594">
    <property type="entry name" value="ASPARTYL/LYSYL-TRNA SYNTHETASE"/>
    <property type="match status" value="1"/>
</dbReference>
<dbReference type="Pfam" id="PF02938">
    <property type="entry name" value="GAD"/>
    <property type="match status" value="1"/>
</dbReference>
<dbReference type="Pfam" id="PF00152">
    <property type="entry name" value="tRNA-synt_2"/>
    <property type="match status" value="1"/>
</dbReference>
<dbReference type="Pfam" id="PF01336">
    <property type="entry name" value="tRNA_anti-codon"/>
    <property type="match status" value="1"/>
</dbReference>
<dbReference type="PRINTS" id="PR01042">
    <property type="entry name" value="TRNASYNTHASP"/>
</dbReference>
<dbReference type="SUPFAM" id="SSF55681">
    <property type="entry name" value="Class II aaRS and biotin synthetases"/>
    <property type="match status" value="1"/>
</dbReference>
<dbReference type="SUPFAM" id="SSF55261">
    <property type="entry name" value="GAD domain-like"/>
    <property type="match status" value="1"/>
</dbReference>
<dbReference type="SUPFAM" id="SSF50249">
    <property type="entry name" value="Nucleic acid-binding proteins"/>
    <property type="match status" value="1"/>
</dbReference>
<dbReference type="PROSITE" id="PS50862">
    <property type="entry name" value="AA_TRNA_LIGASE_II"/>
    <property type="match status" value="1"/>
</dbReference>
<gene>
    <name evidence="1" type="primary">aspS</name>
    <name type="ordered locus">NMC1684</name>
</gene>
<evidence type="ECO:0000255" key="1">
    <source>
        <dbReference type="HAMAP-Rule" id="MF_00044"/>
    </source>
</evidence>
<name>SYDND_NEIMF</name>
<sequence length="602" mass="67945">MRTNYCGLISEQYLDQTVTVKGWVHRRRDHGGVIFIDLRDREGIVQVVIDPDTPEAFAAADSARNEYVLSITGRVRNRPEGTTNDKMISGKIEILAKEIEVLNAAATPPFQIDDENISENVRLTNRVIDLRRPVMQRNLRLRYQVAMGVRRYLDAQGFIDIETPMLTRSTPEGARDYLVPSRVHPGEFFALPQSPQLFKQLLMVAGFDRYYQITKCFRDEDLRADRQPEFTQIDLETSFLNEDEIMDITEGMAKQVFKDALNVDLGDFPRMPYAEAMFYYGSDKPDMRINLKFTELTDLMKTEEFKVFRGAADMKGGRVVALRVPNGAKFSRKEIDEYTKFVGIYGAKGLAYIKVNDVGNLSNGEDSGLQSPIVKFLSENALKEIIARTGAENGDIIFFGADKAKVVNEAIGALRIKVGLEHGAENGYFTDEWKPLWVVDFPMFEYDEEADRYVAVHHPFTAPKEGHEDLMVSDPANCLARAYDMVLNGWEIGGGSIRIHRADVQEKVFAALKISPEEQQEKFGFLLDNLKFGAPPHGGLAFGLDRLVTLMTGAESIRDVIAFPKTQRAQCLLTNAPNSVDDKQLRELSLRLRQKAAETKEA</sequence>
<proteinExistence type="inferred from homology"/>
<feature type="chain" id="PRO_1000006714" description="Aspartate--tRNA(Asp/Asn) ligase">
    <location>
        <begin position="1"/>
        <end position="602"/>
    </location>
</feature>
<feature type="region of interest" description="Aspartate" evidence="1">
    <location>
        <begin position="196"/>
        <end position="199"/>
    </location>
</feature>
<feature type="binding site" evidence="1">
    <location>
        <position position="172"/>
    </location>
    <ligand>
        <name>L-aspartate</name>
        <dbReference type="ChEBI" id="CHEBI:29991"/>
    </ligand>
</feature>
<feature type="binding site" evidence="1">
    <location>
        <begin position="218"/>
        <end position="220"/>
    </location>
    <ligand>
        <name>ATP</name>
        <dbReference type="ChEBI" id="CHEBI:30616"/>
    </ligand>
</feature>
<feature type="binding site" evidence="1">
    <location>
        <position position="218"/>
    </location>
    <ligand>
        <name>L-aspartate</name>
        <dbReference type="ChEBI" id="CHEBI:29991"/>
    </ligand>
</feature>
<feature type="binding site" evidence="1">
    <location>
        <position position="227"/>
    </location>
    <ligand>
        <name>ATP</name>
        <dbReference type="ChEBI" id="CHEBI:30616"/>
    </ligand>
</feature>
<feature type="binding site" evidence="1">
    <location>
        <position position="457"/>
    </location>
    <ligand>
        <name>L-aspartate</name>
        <dbReference type="ChEBI" id="CHEBI:29991"/>
    </ligand>
</feature>
<feature type="binding site" evidence="1">
    <location>
        <position position="491"/>
    </location>
    <ligand>
        <name>ATP</name>
        <dbReference type="ChEBI" id="CHEBI:30616"/>
    </ligand>
</feature>
<feature type="binding site" evidence="1">
    <location>
        <position position="498"/>
    </location>
    <ligand>
        <name>L-aspartate</name>
        <dbReference type="ChEBI" id="CHEBI:29991"/>
    </ligand>
</feature>
<feature type="binding site" evidence="1">
    <location>
        <begin position="543"/>
        <end position="546"/>
    </location>
    <ligand>
        <name>ATP</name>
        <dbReference type="ChEBI" id="CHEBI:30616"/>
    </ligand>
</feature>
<feature type="site" description="Important for tRNA non-discrimination" evidence="1">
    <location>
        <position position="30"/>
    </location>
</feature>
<feature type="site" description="Important for tRNA non-discrimination" evidence="1">
    <location>
        <position position="81"/>
    </location>
</feature>
<organism>
    <name type="scientific">Neisseria meningitidis serogroup C / serotype 2a (strain ATCC 700532 / DSM 15464 / FAM18)</name>
    <dbReference type="NCBI Taxonomy" id="272831"/>
    <lineage>
        <taxon>Bacteria</taxon>
        <taxon>Pseudomonadati</taxon>
        <taxon>Pseudomonadota</taxon>
        <taxon>Betaproteobacteria</taxon>
        <taxon>Neisseriales</taxon>
        <taxon>Neisseriaceae</taxon>
        <taxon>Neisseria</taxon>
    </lineage>
</organism>
<reference key="1">
    <citation type="journal article" date="2007" name="PLoS Genet.">
        <title>Meningococcal genetic variation mechanisms viewed through comparative analysis of serogroup C strain FAM18.</title>
        <authorList>
            <person name="Bentley S.D."/>
            <person name="Vernikos G.S."/>
            <person name="Snyder L.A.S."/>
            <person name="Churcher C."/>
            <person name="Arrowsmith C."/>
            <person name="Chillingworth T."/>
            <person name="Cronin A."/>
            <person name="Davis P.H."/>
            <person name="Holroyd N.E."/>
            <person name="Jagels K."/>
            <person name="Maddison M."/>
            <person name="Moule S."/>
            <person name="Rabbinowitsch E."/>
            <person name="Sharp S."/>
            <person name="Unwin L."/>
            <person name="Whitehead S."/>
            <person name="Quail M.A."/>
            <person name="Achtman M."/>
            <person name="Barrell B.G."/>
            <person name="Saunders N.J."/>
            <person name="Parkhill J."/>
        </authorList>
    </citation>
    <scope>NUCLEOTIDE SEQUENCE [LARGE SCALE GENOMIC DNA]</scope>
    <source>
        <strain>ATCC 700532 / DSM 15464 / FAM18</strain>
    </source>
</reference>
<keyword id="KW-0030">Aminoacyl-tRNA synthetase</keyword>
<keyword id="KW-0067">ATP-binding</keyword>
<keyword id="KW-0963">Cytoplasm</keyword>
<keyword id="KW-0436">Ligase</keyword>
<keyword id="KW-0547">Nucleotide-binding</keyword>
<keyword id="KW-0648">Protein biosynthesis</keyword>
<protein>
    <recommendedName>
        <fullName evidence="1">Aspartate--tRNA(Asp/Asn) ligase</fullName>
        <ecNumber evidence="1">6.1.1.23</ecNumber>
    </recommendedName>
    <alternativeName>
        <fullName evidence="1">Aspartyl-tRNA synthetase</fullName>
        <shortName evidence="1">AspRS</shortName>
    </alternativeName>
    <alternativeName>
        <fullName evidence="1">Non-discriminating aspartyl-tRNA synthetase</fullName>
        <shortName evidence="1">ND-AspRS</shortName>
    </alternativeName>
</protein>
<accession>A1KVG2</accession>